<dbReference type="EC" id="3.6.1.31" evidence="1"/>
<dbReference type="EMBL" id="CP001402">
    <property type="protein sequence ID" value="ACR42132.1"/>
    <property type="molecule type" value="Genomic_DNA"/>
</dbReference>
<dbReference type="RefSeq" id="WP_012711528.1">
    <property type="nucleotide sequence ID" value="NC_012726.1"/>
</dbReference>
<dbReference type="SMR" id="C4KHR8"/>
<dbReference type="GeneID" id="15297922"/>
<dbReference type="GeneID" id="84061845"/>
<dbReference type="KEGG" id="sid:M164_1531"/>
<dbReference type="HOGENOM" id="CLU_123337_0_0_2"/>
<dbReference type="UniPathway" id="UPA00031">
    <property type="reaction ID" value="UER00007"/>
</dbReference>
<dbReference type="Proteomes" id="UP000001479">
    <property type="component" value="Chromosome"/>
</dbReference>
<dbReference type="GO" id="GO:0005737">
    <property type="term" value="C:cytoplasm"/>
    <property type="evidence" value="ECO:0007669"/>
    <property type="project" value="UniProtKB-SubCell"/>
</dbReference>
<dbReference type="GO" id="GO:0005524">
    <property type="term" value="F:ATP binding"/>
    <property type="evidence" value="ECO:0007669"/>
    <property type="project" value="UniProtKB-KW"/>
</dbReference>
<dbReference type="GO" id="GO:0004636">
    <property type="term" value="F:phosphoribosyl-ATP diphosphatase activity"/>
    <property type="evidence" value="ECO:0007669"/>
    <property type="project" value="UniProtKB-UniRule"/>
</dbReference>
<dbReference type="GO" id="GO:0000105">
    <property type="term" value="P:L-histidine biosynthetic process"/>
    <property type="evidence" value="ECO:0007669"/>
    <property type="project" value="UniProtKB-UniRule"/>
</dbReference>
<dbReference type="CDD" id="cd11534">
    <property type="entry name" value="NTP-PPase_HisIE_like"/>
    <property type="match status" value="1"/>
</dbReference>
<dbReference type="Gene3D" id="1.10.287.1080">
    <property type="entry name" value="MazG-like"/>
    <property type="match status" value="1"/>
</dbReference>
<dbReference type="HAMAP" id="MF_01020">
    <property type="entry name" value="HisE"/>
    <property type="match status" value="1"/>
</dbReference>
<dbReference type="InterPro" id="IPR008179">
    <property type="entry name" value="HisE"/>
</dbReference>
<dbReference type="InterPro" id="IPR021130">
    <property type="entry name" value="PRib-ATP_PPHydrolase-like"/>
</dbReference>
<dbReference type="NCBIfam" id="TIGR03188">
    <property type="entry name" value="histidine_hisI"/>
    <property type="match status" value="1"/>
</dbReference>
<dbReference type="PANTHER" id="PTHR42945">
    <property type="entry name" value="HISTIDINE BIOSYNTHESIS BIFUNCTIONAL PROTEIN"/>
    <property type="match status" value="1"/>
</dbReference>
<dbReference type="PANTHER" id="PTHR42945:SF1">
    <property type="entry name" value="HISTIDINE BIOSYNTHESIS BIFUNCTIONAL PROTEIN HIS7"/>
    <property type="match status" value="1"/>
</dbReference>
<dbReference type="Pfam" id="PF01503">
    <property type="entry name" value="PRA-PH"/>
    <property type="match status" value="1"/>
</dbReference>
<dbReference type="SUPFAM" id="SSF101386">
    <property type="entry name" value="all-alpha NTP pyrophosphatases"/>
    <property type="match status" value="1"/>
</dbReference>
<evidence type="ECO:0000255" key="1">
    <source>
        <dbReference type="HAMAP-Rule" id="MF_01020"/>
    </source>
</evidence>
<proteinExistence type="inferred from homology"/>
<protein>
    <recommendedName>
        <fullName evidence="1">Phosphoribosyl-ATP pyrophosphatase</fullName>
        <shortName evidence="1">PRA-PH</shortName>
        <ecNumber evidence="1">3.6.1.31</ecNumber>
    </recommendedName>
</protein>
<accession>C4KHR8</accession>
<sequence length="94" mass="10797">MSNEIVDKLYKVILDRIEKRPTGSYTAEIVNKGKAYVARKVGEESVETIVASLAENKERFISEVADLIYHLLVLMALEGVTPDDIYRELERRRK</sequence>
<gene>
    <name evidence="1" type="primary">hisE</name>
    <name type="ordered locus">M164_1531</name>
</gene>
<reference key="1">
    <citation type="journal article" date="2009" name="Proc. Natl. Acad. Sci. U.S.A.">
        <title>Biogeography of the Sulfolobus islandicus pan-genome.</title>
        <authorList>
            <person name="Reno M.L."/>
            <person name="Held N.L."/>
            <person name="Fields C.J."/>
            <person name="Burke P.V."/>
            <person name="Whitaker R.J."/>
        </authorList>
    </citation>
    <scope>NUCLEOTIDE SEQUENCE [LARGE SCALE GENOMIC DNA]</scope>
    <source>
        <strain>M.16.4 / Kamchatka #3</strain>
    </source>
</reference>
<comment type="catalytic activity">
    <reaction evidence="1">
        <text>1-(5-phospho-beta-D-ribosyl)-ATP + H2O = 1-(5-phospho-beta-D-ribosyl)-5'-AMP + diphosphate + H(+)</text>
        <dbReference type="Rhea" id="RHEA:22828"/>
        <dbReference type="ChEBI" id="CHEBI:15377"/>
        <dbReference type="ChEBI" id="CHEBI:15378"/>
        <dbReference type="ChEBI" id="CHEBI:33019"/>
        <dbReference type="ChEBI" id="CHEBI:59457"/>
        <dbReference type="ChEBI" id="CHEBI:73183"/>
        <dbReference type="EC" id="3.6.1.31"/>
    </reaction>
</comment>
<comment type="pathway">
    <text evidence="1">Amino-acid biosynthesis; L-histidine biosynthesis; L-histidine from 5-phospho-alpha-D-ribose 1-diphosphate: step 2/9.</text>
</comment>
<comment type="subcellular location">
    <subcellularLocation>
        <location evidence="1">Cytoplasm</location>
    </subcellularLocation>
</comment>
<comment type="similarity">
    <text evidence="1">Belongs to the PRA-PH family.</text>
</comment>
<organism>
    <name type="scientific">Saccharolobus islandicus (strain M.16.4 / Kamchatka #3)</name>
    <name type="common">Sulfolobus islandicus</name>
    <dbReference type="NCBI Taxonomy" id="426118"/>
    <lineage>
        <taxon>Archaea</taxon>
        <taxon>Thermoproteota</taxon>
        <taxon>Thermoprotei</taxon>
        <taxon>Sulfolobales</taxon>
        <taxon>Sulfolobaceae</taxon>
        <taxon>Saccharolobus</taxon>
    </lineage>
</organism>
<keyword id="KW-0028">Amino-acid biosynthesis</keyword>
<keyword id="KW-0067">ATP-binding</keyword>
<keyword id="KW-0963">Cytoplasm</keyword>
<keyword id="KW-0368">Histidine biosynthesis</keyword>
<keyword id="KW-0378">Hydrolase</keyword>
<keyword id="KW-0547">Nucleotide-binding</keyword>
<name>HIS2_SACI6</name>
<feature type="chain" id="PRO_1000213291" description="Phosphoribosyl-ATP pyrophosphatase">
    <location>
        <begin position="1"/>
        <end position="94"/>
    </location>
</feature>